<protein>
    <recommendedName>
        <fullName>Acylphosphatase</fullName>
        <ecNumber>3.6.1.7</ecNumber>
    </recommendedName>
    <alternativeName>
        <fullName>Acylphosphate phosphohydrolase</fullName>
    </alternativeName>
</protein>
<name>ACYP_BURCM</name>
<comment type="catalytic activity">
    <reaction>
        <text>an acyl phosphate + H2O = a carboxylate + phosphate + H(+)</text>
        <dbReference type="Rhea" id="RHEA:14965"/>
        <dbReference type="ChEBI" id="CHEBI:15377"/>
        <dbReference type="ChEBI" id="CHEBI:15378"/>
        <dbReference type="ChEBI" id="CHEBI:29067"/>
        <dbReference type="ChEBI" id="CHEBI:43474"/>
        <dbReference type="ChEBI" id="CHEBI:59918"/>
        <dbReference type="EC" id="3.6.1.7"/>
    </reaction>
</comment>
<comment type="similarity">
    <text evidence="2">Belongs to the acylphosphatase family.</text>
</comment>
<comment type="sequence caution" evidence="2">
    <conflict type="erroneous initiation">
        <sequence resource="EMBL-CDS" id="ABI90421"/>
    </conflict>
</comment>
<evidence type="ECO:0000255" key="1">
    <source>
        <dbReference type="PROSITE-ProRule" id="PRU00520"/>
    </source>
</evidence>
<evidence type="ECO:0000305" key="2"/>
<keyword id="KW-0378">Hydrolase</keyword>
<organism>
    <name type="scientific">Burkholderia ambifaria (strain ATCC BAA-244 / DSM 16087 / CCUG 44356 / LMG 19182 / AMMD)</name>
    <name type="common">Burkholderia cepacia (strain AMMD)</name>
    <dbReference type="NCBI Taxonomy" id="339670"/>
    <lineage>
        <taxon>Bacteria</taxon>
        <taxon>Pseudomonadati</taxon>
        <taxon>Pseudomonadota</taxon>
        <taxon>Betaproteobacteria</taxon>
        <taxon>Burkholderiales</taxon>
        <taxon>Burkholderiaceae</taxon>
        <taxon>Burkholderia</taxon>
        <taxon>Burkholderia cepacia complex</taxon>
    </lineage>
</organism>
<sequence length="98" mass="11376">MSRNELDERIETYYVRVRGVVQGVGFRHATVREAHALKLRGWVANLEDGSVEAMIQGPGAQIDRMLAWLRHGPPAARVTEVTFEERLIERRFDRFQQQ</sequence>
<dbReference type="EC" id="3.6.1.7"/>
<dbReference type="EMBL" id="CP000441">
    <property type="protein sequence ID" value="ABI90421.1"/>
    <property type="status" value="ALT_INIT"/>
    <property type="molecule type" value="Genomic_DNA"/>
</dbReference>
<dbReference type="RefSeq" id="WP_041491699.1">
    <property type="nucleotide sequence ID" value="NZ_CP009799.1"/>
</dbReference>
<dbReference type="SMR" id="Q0B602"/>
<dbReference type="KEGG" id="bam:Bamb_4872"/>
<dbReference type="PATRIC" id="fig|339670.21.peg.5236"/>
<dbReference type="eggNOG" id="COG1254">
    <property type="taxonomic scope" value="Bacteria"/>
</dbReference>
<dbReference type="Proteomes" id="UP000000662">
    <property type="component" value="Chromosome 2"/>
</dbReference>
<dbReference type="GO" id="GO:0003998">
    <property type="term" value="F:acylphosphatase activity"/>
    <property type="evidence" value="ECO:0007669"/>
    <property type="project" value="UniProtKB-EC"/>
</dbReference>
<dbReference type="Gene3D" id="3.30.70.100">
    <property type="match status" value="1"/>
</dbReference>
<dbReference type="InterPro" id="IPR020456">
    <property type="entry name" value="Acylphosphatase"/>
</dbReference>
<dbReference type="InterPro" id="IPR001792">
    <property type="entry name" value="Acylphosphatase-like_dom"/>
</dbReference>
<dbReference type="InterPro" id="IPR036046">
    <property type="entry name" value="Acylphosphatase-like_dom_sf"/>
</dbReference>
<dbReference type="InterPro" id="IPR017968">
    <property type="entry name" value="Acylphosphatase_CS"/>
</dbReference>
<dbReference type="NCBIfam" id="NF010998">
    <property type="entry name" value="PRK14424.1"/>
    <property type="match status" value="1"/>
</dbReference>
<dbReference type="PANTHER" id="PTHR47268">
    <property type="entry name" value="ACYLPHOSPHATASE"/>
    <property type="match status" value="1"/>
</dbReference>
<dbReference type="PANTHER" id="PTHR47268:SF4">
    <property type="entry name" value="ACYLPHOSPHATASE"/>
    <property type="match status" value="1"/>
</dbReference>
<dbReference type="Pfam" id="PF00708">
    <property type="entry name" value="Acylphosphatase"/>
    <property type="match status" value="1"/>
</dbReference>
<dbReference type="PRINTS" id="PR00112">
    <property type="entry name" value="ACYLPHPHTASE"/>
</dbReference>
<dbReference type="SUPFAM" id="SSF54975">
    <property type="entry name" value="Acylphosphatase/BLUF domain-like"/>
    <property type="match status" value="1"/>
</dbReference>
<dbReference type="PROSITE" id="PS00150">
    <property type="entry name" value="ACYLPHOSPHATASE_1"/>
    <property type="match status" value="1"/>
</dbReference>
<dbReference type="PROSITE" id="PS00151">
    <property type="entry name" value="ACYLPHOSPHATASE_2"/>
    <property type="match status" value="1"/>
</dbReference>
<dbReference type="PROSITE" id="PS51160">
    <property type="entry name" value="ACYLPHOSPHATASE_3"/>
    <property type="match status" value="1"/>
</dbReference>
<proteinExistence type="inferred from homology"/>
<feature type="chain" id="PRO_0000326669" description="Acylphosphatase">
    <location>
        <begin position="1"/>
        <end position="98"/>
    </location>
</feature>
<feature type="domain" description="Acylphosphatase-like" evidence="1">
    <location>
        <begin position="12"/>
        <end position="98"/>
    </location>
</feature>
<feature type="active site" evidence="1">
    <location>
        <position position="27"/>
    </location>
</feature>
<feature type="active site" evidence="1">
    <location>
        <position position="45"/>
    </location>
</feature>
<reference key="1">
    <citation type="submission" date="2006-08" db="EMBL/GenBank/DDBJ databases">
        <title>Complete sequence of chromosome 2 of Burkholderia cepacia AMMD.</title>
        <authorList>
            <person name="Copeland A."/>
            <person name="Lucas S."/>
            <person name="Lapidus A."/>
            <person name="Barry K."/>
            <person name="Detter J.C."/>
            <person name="Glavina del Rio T."/>
            <person name="Hammon N."/>
            <person name="Israni S."/>
            <person name="Pitluck S."/>
            <person name="Bruce D."/>
            <person name="Chain P."/>
            <person name="Malfatti S."/>
            <person name="Shin M."/>
            <person name="Vergez L."/>
            <person name="Schmutz J."/>
            <person name="Larimer F."/>
            <person name="Land M."/>
            <person name="Hauser L."/>
            <person name="Kyrpides N."/>
            <person name="Kim E."/>
            <person name="Parke J."/>
            <person name="Coenye T."/>
            <person name="Konstantinidis K."/>
            <person name="Ramette A."/>
            <person name="Tiedje J."/>
            <person name="Richardson P."/>
        </authorList>
    </citation>
    <scope>NUCLEOTIDE SEQUENCE [LARGE SCALE GENOMIC DNA]</scope>
    <source>
        <strain>ATCC BAA-244 / DSM 16087 / CCUG 44356 / LMG 19182 / AMMD</strain>
    </source>
</reference>
<gene>
    <name type="primary">acyP</name>
    <name type="ordered locus">Bamb_4872</name>
</gene>
<accession>Q0B602</accession>